<name>ACT21_ALTAL</name>
<organism>
    <name type="scientific">Alternaria alternata</name>
    <name type="common">Alternaria rot fungus</name>
    <name type="synonym">Torula alternata</name>
    <dbReference type="NCBI Taxonomy" id="5599"/>
    <lineage>
        <taxon>Eukaryota</taxon>
        <taxon>Fungi</taxon>
        <taxon>Dikarya</taxon>
        <taxon>Ascomycota</taxon>
        <taxon>Pezizomycotina</taxon>
        <taxon>Dothideomycetes</taxon>
        <taxon>Pleosporomycetidae</taxon>
        <taxon>Pleosporales</taxon>
        <taxon>Pleosporineae</taxon>
        <taxon>Pleosporaceae</taxon>
        <taxon>Alternaria</taxon>
        <taxon>Alternaria sect. Alternaria</taxon>
        <taxon>Alternaria alternata complex</taxon>
    </lineage>
</organism>
<sequence>MQQPIVGVGHSMGGCQIATLSVTSRRIFSTMILLDPAIGPPEMGLATLGLGQLTLRRRTQWLTREDAEKALRTSFSTWDPQVLDLLIKHSIHSDKQSVEMEDGPVSLVTGRYQELVNYIKPSFIRSGKVVGQELVHQTGPVDMYHMLGLVTCSTLYLCGGESTLSTPRARELWLSRTAELSYSKDPGEMRKVDERIVPDTGHFLPMEEPKECADIIADWIDKDECMIWNCHIGKQGNIWRDLSNTNRKMNAEVWIEYLQSKL</sequence>
<keyword id="KW-0378">Hydrolase</keyword>
<keyword id="KW-0576">Peroxisome</keyword>
<keyword id="KW-0843">Virulence</keyword>
<proteinExistence type="evidence at transcript level"/>
<gene>
    <name evidence="8" type="primary">ACTT2-1</name>
</gene>
<protein>
    <recommendedName>
        <fullName evidence="8">Abhydrolase domain-containing protein ACTT2-1</fullName>
        <ecNumber evidence="11">3.1.1.-</ecNumber>
    </recommendedName>
    <alternativeName>
        <fullName evidence="8">ACT-toxin biosynthesis protein 2-1</fullName>
    </alternativeName>
</protein>
<evidence type="ECO:0000250" key="1">
    <source>
        <dbReference type="UniProtKB" id="O93801"/>
    </source>
</evidence>
<evidence type="ECO:0000269" key="2">
    <source>
    </source>
</evidence>
<evidence type="ECO:0000269" key="3">
    <source>
    </source>
</evidence>
<evidence type="ECO:0000269" key="4">
    <source>
    </source>
</evidence>
<evidence type="ECO:0000269" key="5">
    <source>
    </source>
</evidence>
<evidence type="ECO:0000269" key="6">
    <source>
    </source>
</evidence>
<evidence type="ECO:0000269" key="7">
    <source>
    </source>
</evidence>
<evidence type="ECO:0000303" key="8">
    <source>
    </source>
</evidence>
<evidence type="ECO:0000303" key="9">
    <source>
    </source>
</evidence>
<evidence type="ECO:0000305" key="10"/>
<evidence type="ECO:0000305" key="11">
    <source>
    </source>
</evidence>
<dbReference type="EC" id="3.1.1.-" evidence="11"/>
<dbReference type="EMBL" id="AB432915">
    <property type="protein sequence ID" value="BAI44322.1"/>
    <property type="molecule type" value="Genomic_DNA"/>
</dbReference>
<dbReference type="SMR" id="C9K1M8"/>
<dbReference type="VEuPathDB" id="FungiDB:CC77DRAFT_959939"/>
<dbReference type="GO" id="GO:0005777">
    <property type="term" value="C:peroxisome"/>
    <property type="evidence" value="ECO:0007669"/>
    <property type="project" value="UniProtKB-SubCell"/>
</dbReference>
<dbReference type="GO" id="GO:0016787">
    <property type="term" value="F:hydrolase activity"/>
    <property type="evidence" value="ECO:0007669"/>
    <property type="project" value="UniProtKB-KW"/>
</dbReference>
<dbReference type="Gene3D" id="3.40.50.1820">
    <property type="entry name" value="alpha/beta hydrolase"/>
    <property type="match status" value="1"/>
</dbReference>
<dbReference type="InterPro" id="IPR000073">
    <property type="entry name" value="AB_hydrolase_1"/>
</dbReference>
<dbReference type="InterPro" id="IPR029058">
    <property type="entry name" value="AB_hydrolase_fold"/>
</dbReference>
<dbReference type="Pfam" id="PF12697">
    <property type="entry name" value="Abhydrolase_6"/>
    <property type="match status" value="1"/>
</dbReference>
<dbReference type="SUPFAM" id="SSF53474">
    <property type="entry name" value="alpha/beta-Hydrolases"/>
    <property type="match status" value="1"/>
</dbReference>
<comment type="function">
    <text evidence="2 3 4 5 6 9">Abhydrolase domain-containing protein; part of the gene clusters that mediate the biosynthesis of the host-selective toxins (HSTs) ACT-toxins responsible for brown spot of tangerine disease by the tangerine pathotype which affects tangerines and mandarins (PubMed:18944496, PubMed:18986255). ACT-toxins consist of three moieties, 9,10-epoxy-8-hydroxy-9-methyl-decatrienoic acid (EDA), valine and a polyketide (PubMed:22846083). ACT-toxin I is toxic to both citrus and pear; toxin II the 5''-deoxy derivative of ACT-toxin I, is highly toxic to pear and slightly toxic to citrus (PubMed:22846083). On cellular level, ACT-toxins affect plasma membrane of susceptible cells and cause a sudden increase in loss of K(+) after a few minutes of toxin treatment (PubMed:22846083). The acyl-CoA ligase ACTT1, the hydrolase ACTT2, the enoyl-CoA hydratases ACTT3 and ACTT6, and the acyl-CoA synthetase ACTT5 are all involved in the biosynthesis of the AK-, AF- and ACT-toxin common 9,10-epoxy-8-hydroxy-9-methyl-decatrienoic acid (EDA) structural moiety (PubMed:18944496, PubMed:18986255, PubMed:19271978). The exact role of each enzyme, and of additional enzymes identified within the AF-toxin clusters have still to be determined (PubMed:18944496, PubMed:18986255, PubMed:19271978). On the other hand, ACTTS1 to ACTTS4 are specific to the tangerine pathotype (PubMed:22846083). The function of ACTTS3 is to elongate the polyketide chain portion of ACT-toxin that is unique to this toxin (PubMed:20192828). The enoyl-reductase ACTTS2 might complement the missing enoyl-reductase (ER) domain in ACTTS3 in the synthesis of the polyketide portion of ACT-toxin (PubMed:20055645). The roles of the nonribosomal peptide synthetases-related proteins ACTTS1 and ACTTS4 have also still not been elucidated (PubMed:22846083).</text>
</comment>
<comment type="pathway">
    <text evidence="3">Mycotoxin biosynthesis.</text>
</comment>
<comment type="subcellular location">
    <subcellularLocation>
        <location evidence="1">Peroxisome</location>
    </subcellularLocation>
    <text evidence="1">The peroxisomal location requires the C-terminal tripeptide peroxisomal targeting signal.</text>
</comment>
<comment type="induction">
    <text evidence="7">Expression is positively regulated by CSN5 during infection.</text>
</comment>
<comment type="disruption phenotype">
    <text evidence="3">Abolishes the production of ACT-toxin and impairs the formation of lesions on leaves sprayed with conidia (PubMed:18986255). Does not affect growth rate of cultures, sporulation, and spore germination (PubMed:18986255).</text>
</comment>
<comment type="miscellaneous">
    <text evidence="3">Gene clusters encoding host-selective toxins (HSTs) are localized on conditionally dispensable chromosomes (CDCs), also called supernumerary chromosomes, where they are present in multiple copies (PubMed:18986255). The CDCs are not essential for saprophytic growth but controls host-selective pathogenicity (PubMed:18986255). Although conventional disruption of ACTT2 could not be accomplished due to the high number of the copies identified in the genome, the high sequence identity among these copies of ACTT2 is likely an advantage for RNA silencing, because it allows knockdown of all copies of this gene simultaneously (PubMed:18986255).</text>
</comment>
<comment type="similarity">
    <text evidence="10">Belongs to the AB hydrolase superfamily. AKT2 hydrolase family.</text>
</comment>
<feature type="chain" id="PRO_0000444827" description="Abhydrolase domain-containing protein ACTT2-1">
    <location>
        <begin position="1"/>
        <end position="262"/>
    </location>
</feature>
<feature type="short sequence motif" description="Peroxisomal targeting signal type 1" evidence="1">
    <location>
        <begin position="260"/>
        <end position="262"/>
    </location>
</feature>
<reference key="1">
    <citation type="journal article" date="2008" name="Mol. Plant Microbe Interact.">
        <title>Functional analysis of a multicopy host-selective ACT-toxin biosynthesis gene in the tangerine pathotype of Alternaria alternata using RNA silencing.</title>
        <authorList>
            <person name="Miyamoto Y."/>
            <person name="Masunaka A."/>
            <person name="Tsuge T."/>
            <person name="Yamamoto M."/>
            <person name="Ohtani K."/>
            <person name="Fukumoto T."/>
            <person name="Gomi K."/>
            <person name="Peever T.L."/>
            <person name="Akimitsu K."/>
        </authorList>
    </citation>
    <scope>NUCLEOTIDE SEQUENCE [GENOMIC DNA]</scope>
    <scope>FUNCTION</scope>
    <scope>DISRUPTION PHENOTYPE</scope>
    <scope>PATHWAY</scope>
    <source>
        <strain>BC3-5-1-OS2A</strain>
    </source>
</reference>
<reference key="2">
    <citation type="journal article" date="2000" name="Phytopathology">
        <title>Distribution and characterization of AKT homologs in the tangerine pathotype of Alternaria alternata.</title>
        <authorList>
            <person name="Masunaka A."/>
            <person name="Tanaka A."/>
            <person name="Tsuge T."/>
            <person name="Peever T.L."/>
            <person name="Timmer L.W."/>
            <person name="Yamamoto M."/>
            <person name="Yamamoto H."/>
            <person name="Akimitsu K."/>
        </authorList>
    </citation>
    <scope>FUNCTION</scope>
</reference>
<reference key="3">
    <citation type="journal article" date="2009" name="Phytopathology">
        <title>Function of genes encoding acyl-CoA synthetase and enoyl-CoA hydratase for host-selective act-toxin biosynthesis in the tangerine pathotype of Alternaria alternata.</title>
        <authorList>
            <person name="Miyamoto M."/>
            <person name="Ishii Y."/>
            <person name="Honda A."/>
            <person name="Masunaka A."/>
            <person name="Tsuge T."/>
            <person name="Yamamoto M."/>
            <person name="Ohtani K."/>
            <person name="Fukumoto T."/>
            <person name="Gomi K."/>
            <person name="Peever T.L."/>
            <person name="Akimitsu K."/>
        </authorList>
    </citation>
    <scope>FUNCTION</scope>
    <source>
        <strain>SH20</strain>
    </source>
</reference>
<reference key="4">
    <citation type="journal article" date="2010" name="Phytopathology">
        <title>Role of the host-selective ACT-toxin synthesis gene ACTTS2 encoding an enoyl-reductase in pathogenicity of the tangerine pathotype of Alternaria alternata.</title>
        <authorList>
            <person name="Ajiro N."/>
            <person name="Miyamoto Y."/>
            <person name="Masunaka A."/>
            <person name="Tsuge T."/>
            <person name="Yamamoto M."/>
            <person name="Ohtani K."/>
            <person name="Fukumoto T."/>
            <person name="Gomi K."/>
            <person name="Peever T.L."/>
            <person name="Izumi Y."/>
            <person name="Tada Y."/>
            <person name="Akimitsu K."/>
        </authorList>
    </citation>
    <scope>FUNCTION</scope>
    <source>
        <strain>SH20</strain>
    </source>
</reference>
<reference key="5">
    <citation type="journal article" date="2010" name="Mol. Plant Microbe Interact.">
        <title>ACTTS3 encoding a polyketide synthase is essential for the biosynthesis of ACT-toxin and pathogenicity in the tangerine pathotype of Alternaria alternata.</title>
        <authorList>
            <person name="Miyamoto Y."/>
            <person name="Masunaka A."/>
            <person name="Tsuge T."/>
            <person name="Yamamoto M."/>
            <person name="Ohtani K."/>
            <person name="Fukumoto T."/>
            <person name="Gomi K."/>
            <person name="Peever T.L."/>
            <person name="Tada Y."/>
            <person name="Ichimura K."/>
            <person name="Akimitsu K."/>
        </authorList>
    </citation>
    <scope>FUNCTION</scope>
    <source>
        <strain>SH20</strain>
    </source>
</reference>
<reference key="6">
    <citation type="journal article" date="2013" name="FEMS Microbiol. Rev.">
        <title>Host-selective toxins produced by the plant pathogenic fungus Alternaria alternata.</title>
        <authorList>
            <person name="Tsuge T."/>
            <person name="Harimoto Y."/>
            <person name="Akimitsu K."/>
            <person name="Ohtani K."/>
            <person name="Kodama M."/>
            <person name="Akagi Y."/>
            <person name="Egusa M."/>
            <person name="Yamamoto M."/>
            <person name="Otani H."/>
        </authorList>
    </citation>
    <scope>REVIEW ON HOST-SELECTIVE TOXINS</scope>
</reference>
<reference key="7">
    <citation type="journal article" date="2018" name="Front. Microbiol.">
        <title>Csn5 is required for the conidiogenesis and pathogenesis of the Alternaria alternata tangerine pathotype.</title>
        <authorList>
            <person name="Wang M."/>
            <person name="Yang X."/>
            <person name="Ruan R."/>
            <person name="Fu H."/>
            <person name="Li H."/>
        </authorList>
    </citation>
    <scope>INDUCTION</scope>
</reference>
<accession>C9K1M8</accession>